<proteinExistence type="evidence at protein level"/>
<accession>Q9H336</accession>
<accession>B2RA60</accession>
<accession>B7Z929</accession>
<comment type="subcellular location">
    <subcellularLocation>
        <location evidence="5">Secreted</location>
    </subcellularLocation>
</comment>
<comment type="alternative products">
    <event type="alternative splicing"/>
    <isoform>
        <id>Q9H336-1</id>
        <name>1</name>
        <sequence type="displayed"/>
    </isoform>
    <isoform>
        <id>Q9H336-2</id>
        <name>2</name>
        <sequence type="described" ref="VSP_055281 VSP_055282"/>
    </isoform>
</comment>
<comment type="similarity">
    <text evidence="5">Belongs to the CRISP family.</text>
</comment>
<sequence>MKCTAREWLRVTTVLFMARAIPAMVVPNATLLEKLLEKYMDEDGEWWIAKQRGKRAITDNDMQSILDLHNKLRSQVYPTASNMEYMTWDVELERSAESWAESCLWEHGPASLLPSIGQNLGAHWGRYRPPTFHVQSWYDEVKDFSYPYEHECNPYCPFRCSGPVCTHYTQVVWATSNRIGCAINLCHNMNIWGQIWPKAVYLVCNYSPKGNWWGHAPYKHGRPCSACPPSFGGGCRENLCYKEGSDRYYPPREEETNEIERQQSQVHDTHVRTRSDDSSRNEVISAQQMSQIVSCEVRLRDQCKGTTCNRYECPAGCLDSKAKVIGSVHYEMQSSICRAAIHYGIIDNDGGWVDITRQGRKHYFIKSNRNGIQTIGKYQSANSFTVSKVTVQAVTCETTVEQLCPFHKPASHCPRVYCPRNCMQANPHYARVIGTRVYSDLSSICRAAVHAGVVRNHGGYVDVMPVDKRKTYIASFQNGIFSESLQNPPGGKAFRVFAVV</sequence>
<organism>
    <name type="scientific">Homo sapiens</name>
    <name type="common">Human</name>
    <dbReference type="NCBI Taxonomy" id="9606"/>
    <lineage>
        <taxon>Eukaryota</taxon>
        <taxon>Metazoa</taxon>
        <taxon>Chordata</taxon>
        <taxon>Craniata</taxon>
        <taxon>Vertebrata</taxon>
        <taxon>Euteleostomi</taxon>
        <taxon>Mammalia</taxon>
        <taxon>Eutheria</taxon>
        <taxon>Euarchontoglires</taxon>
        <taxon>Primates</taxon>
        <taxon>Haplorrhini</taxon>
        <taxon>Catarrhini</taxon>
        <taxon>Hominidae</taxon>
        <taxon>Homo</taxon>
    </lineage>
</organism>
<evidence type="ECO:0000255" key="1"/>
<evidence type="ECO:0000255" key="2">
    <source>
        <dbReference type="PROSITE-ProRule" id="PRU00123"/>
    </source>
</evidence>
<evidence type="ECO:0000256" key="3">
    <source>
        <dbReference type="SAM" id="MobiDB-lite"/>
    </source>
</evidence>
<evidence type="ECO:0000303" key="4">
    <source>
    </source>
</evidence>
<evidence type="ECO:0000305" key="5"/>
<protein>
    <recommendedName>
        <fullName>Cysteine-rich secretory protein LCCL domain-containing 1</fullName>
    </recommendedName>
    <alternativeName>
        <fullName>CocoaCrisp</fullName>
    </alternativeName>
    <alternativeName>
        <fullName>Cysteine-rich secretory protein 10</fullName>
        <shortName>CRISP-10</shortName>
    </alternativeName>
    <alternativeName>
        <fullName>LCCL domain-containing cysteine-rich secretory protein 1</fullName>
    </alternativeName>
    <alternativeName>
        <fullName>Trypsin inhibitor Hl</fullName>
    </alternativeName>
</protein>
<reference key="1">
    <citation type="submission" date="1999-04" db="EMBL/GenBank/DDBJ databases">
        <title>Cloning and characterization of a trypsin inhibitor-like protein gene in human aorta.</title>
        <authorList>
            <person name="Zhao Y."/>
            <person name="Cao H."/>
            <person name="Jiang Y."/>
            <person name="Meng X."/>
            <person name="Zhao X."/>
            <person name="Liu D."/>
            <person name="Ding J."/>
        </authorList>
    </citation>
    <scope>NUCLEOTIDE SEQUENCE [MRNA] (ISOFORM 1)</scope>
    <source>
        <tissue>Aorta</tissue>
    </source>
</reference>
<reference key="2">
    <citation type="submission" date="2000-12" db="EMBL/GenBank/DDBJ databases">
        <title>A novel cysteine-rich secreted protein (CRISP) family member, CocoaCrisp, provides insight into the process of septation in the developing chicken midbrain.</title>
        <authorList>
            <person name="Smith D.M."/>
            <person name="Collins-Racie L.A."/>
            <person name="Lavallie E.R."/>
            <person name="Gamer L."/>
            <person name="Roberts D.J."/>
            <person name="Marigo V.A."/>
            <person name="Copeland N.G."/>
            <person name="Jenkins N.A."/>
            <person name="McCoy J."/>
            <person name="Tabin C.J."/>
        </authorList>
    </citation>
    <scope>NUCLEOTIDE SEQUENCE [MRNA] (ISOFORM 1)</scope>
    <source>
        <tissue>Heart</tissue>
        <tissue>Testis</tissue>
    </source>
</reference>
<reference key="3">
    <citation type="journal article" date="2003" name="Genome Res.">
        <title>The secreted protein discovery initiative (SPDI), a large-scale effort to identify novel human secreted and transmembrane proteins: a bioinformatics assessment.</title>
        <authorList>
            <person name="Clark H.F."/>
            <person name="Gurney A.L."/>
            <person name="Abaya E."/>
            <person name="Baker K."/>
            <person name="Baldwin D.T."/>
            <person name="Brush J."/>
            <person name="Chen J."/>
            <person name="Chow B."/>
            <person name="Chui C."/>
            <person name="Crowley C."/>
            <person name="Currell B."/>
            <person name="Deuel B."/>
            <person name="Dowd P."/>
            <person name="Eaton D."/>
            <person name="Foster J.S."/>
            <person name="Grimaldi C."/>
            <person name="Gu Q."/>
            <person name="Hass P.E."/>
            <person name="Heldens S."/>
            <person name="Huang A."/>
            <person name="Kim H.S."/>
            <person name="Klimowski L."/>
            <person name="Jin Y."/>
            <person name="Johnson S."/>
            <person name="Lee J."/>
            <person name="Lewis L."/>
            <person name="Liao D."/>
            <person name="Mark M.R."/>
            <person name="Robbie E."/>
            <person name="Sanchez C."/>
            <person name="Schoenfeld J."/>
            <person name="Seshagiri S."/>
            <person name="Simmons L."/>
            <person name="Singh J."/>
            <person name="Smith V."/>
            <person name="Stinson J."/>
            <person name="Vagts A."/>
            <person name="Vandlen R.L."/>
            <person name="Watanabe C."/>
            <person name="Wieand D."/>
            <person name="Woods K."/>
            <person name="Xie M.-H."/>
            <person name="Yansura D.G."/>
            <person name="Yi S."/>
            <person name="Yu G."/>
            <person name="Yuan J."/>
            <person name="Zhang M."/>
            <person name="Zhang Z."/>
            <person name="Goddard A.D."/>
            <person name="Wood W.I."/>
            <person name="Godowski P.J."/>
            <person name="Gray A.M."/>
        </authorList>
    </citation>
    <scope>NUCLEOTIDE SEQUENCE [LARGE SCALE MRNA] (ISOFORM 1)</scope>
</reference>
<reference key="4">
    <citation type="journal article" date="2004" name="Nat. Genet.">
        <title>Complete sequencing and characterization of 21,243 full-length human cDNAs.</title>
        <authorList>
            <person name="Ota T."/>
            <person name="Suzuki Y."/>
            <person name="Nishikawa T."/>
            <person name="Otsuki T."/>
            <person name="Sugiyama T."/>
            <person name="Irie R."/>
            <person name="Wakamatsu A."/>
            <person name="Hayashi K."/>
            <person name="Sato H."/>
            <person name="Nagai K."/>
            <person name="Kimura K."/>
            <person name="Makita H."/>
            <person name="Sekine M."/>
            <person name="Obayashi M."/>
            <person name="Nishi T."/>
            <person name="Shibahara T."/>
            <person name="Tanaka T."/>
            <person name="Ishii S."/>
            <person name="Yamamoto J."/>
            <person name="Saito K."/>
            <person name="Kawai Y."/>
            <person name="Isono Y."/>
            <person name="Nakamura Y."/>
            <person name="Nagahari K."/>
            <person name="Murakami K."/>
            <person name="Yasuda T."/>
            <person name="Iwayanagi T."/>
            <person name="Wagatsuma M."/>
            <person name="Shiratori A."/>
            <person name="Sudo H."/>
            <person name="Hosoiri T."/>
            <person name="Kaku Y."/>
            <person name="Kodaira H."/>
            <person name="Kondo H."/>
            <person name="Sugawara M."/>
            <person name="Takahashi M."/>
            <person name="Kanda K."/>
            <person name="Yokoi T."/>
            <person name="Furuya T."/>
            <person name="Kikkawa E."/>
            <person name="Omura Y."/>
            <person name="Abe K."/>
            <person name="Kamihara K."/>
            <person name="Katsuta N."/>
            <person name="Sato K."/>
            <person name="Tanikawa M."/>
            <person name="Yamazaki M."/>
            <person name="Ninomiya K."/>
            <person name="Ishibashi T."/>
            <person name="Yamashita H."/>
            <person name="Murakawa K."/>
            <person name="Fujimori K."/>
            <person name="Tanai H."/>
            <person name="Kimata M."/>
            <person name="Watanabe M."/>
            <person name="Hiraoka S."/>
            <person name="Chiba Y."/>
            <person name="Ishida S."/>
            <person name="Ono Y."/>
            <person name="Takiguchi S."/>
            <person name="Watanabe S."/>
            <person name="Yosida M."/>
            <person name="Hotuta T."/>
            <person name="Kusano J."/>
            <person name="Kanehori K."/>
            <person name="Takahashi-Fujii A."/>
            <person name="Hara H."/>
            <person name="Tanase T.-O."/>
            <person name="Nomura Y."/>
            <person name="Togiya S."/>
            <person name="Komai F."/>
            <person name="Hara R."/>
            <person name="Takeuchi K."/>
            <person name="Arita M."/>
            <person name="Imose N."/>
            <person name="Musashino K."/>
            <person name="Yuuki H."/>
            <person name="Oshima A."/>
            <person name="Sasaki N."/>
            <person name="Aotsuka S."/>
            <person name="Yoshikawa Y."/>
            <person name="Matsunawa H."/>
            <person name="Ichihara T."/>
            <person name="Shiohata N."/>
            <person name="Sano S."/>
            <person name="Moriya S."/>
            <person name="Momiyama H."/>
            <person name="Satoh N."/>
            <person name="Takami S."/>
            <person name="Terashima Y."/>
            <person name="Suzuki O."/>
            <person name="Nakagawa S."/>
            <person name="Senoh A."/>
            <person name="Mizoguchi H."/>
            <person name="Goto Y."/>
            <person name="Shimizu F."/>
            <person name="Wakebe H."/>
            <person name="Hishigaki H."/>
            <person name="Watanabe T."/>
            <person name="Sugiyama A."/>
            <person name="Takemoto M."/>
            <person name="Kawakami B."/>
            <person name="Yamazaki M."/>
            <person name="Watanabe K."/>
            <person name="Kumagai A."/>
            <person name="Itakura S."/>
            <person name="Fukuzumi Y."/>
            <person name="Fujimori Y."/>
            <person name="Komiyama M."/>
            <person name="Tashiro H."/>
            <person name="Tanigami A."/>
            <person name="Fujiwara T."/>
            <person name="Ono T."/>
            <person name="Yamada K."/>
            <person name="Fujii Y."/>
            <person name="Ozaki K."/>
            <person name="Hirao M."/>
            <person name="Ohmori Y."/>
            <person name="Kawabata A."/>
            <person name="Hikiji T."/>
            <person name="Kobatake N."/>
            <person name="Inagaki H."/>
            <person name="Ikema Y."/>
            <person name="Okamoto S."/>
            <person name="Okitani R."/>
            <person name="Kawakami T."/>
            <person name="Noguchi S."/>
            <person name="Itoh T."/>
            <person name="Shigeta K."/>
            <person name="Senba T."/>
            <person name="Matsumura K."/>
            <person name="Nakajima Y."/>
            <person name="Mizuno T."/>
            <person name="Morinaga M."/>
            <person name="Sasaki M."/>
            <person name="Togashi T."/>
            <person name="Oyama M."/>
            <person name="Hata H."/>
            <person name="Watanabe M."/>
            <person name="Komatsu T."/>
            <person name="Mizushima-Sugano J."/>
            <person name="Satoh T."/>
            <person name="Shirai Y."/>
            <person name="Takahashi Y."/>
            <person name="Nakagawa K."/>
            <person name="Okumura K."/>
            <person name="Nagase T."/>
            <person name="Nomura N."/>
            <person name="Kikuchi H."/>
            <person name="Masuho Y."/>
            <person name="Yamashita R."/>
            <person name="Nakai K."/>
            <person name="Yada T."/>
            <person name="Nakamura Y."/>
            <person name="Ohara O."/>
            <person name="Isogai T."/>
            <person name="Sugano S."/>
        </authorList>
    </citation>
    <scope>NUCLEOTIDE SEQUENCE [LARGE SCALE MRNA] (ISOFORMS 1 AND 2)</scope>
    <source>
        <tissue>Trachea</tissue>
    </source>
</reference>
<reference key="5">
    <citation type="journal article" date="2007" name="BMC Genomics">
        <title>The full-ORF clone resource of the German cDNA consortium.</title>
        <authorList>
            <person name="Bechtel S."/>
            <person name="Rosenfelder H."/>
            <person name="Duda A."/>
            <person name="Schmidt C.P."/>
            <person name="Ernst U."/>
            <person name="Wellenreuther R."/>
            <person name="Mehrle A."/>
            <person name="Schuster C."/>
            <person name="Bahr A."/>
            <person name="Bloecker H."/>
            <person name="Heubner D."/>
            <person name="Hoerlein A."/>
            <person name="Michel G."/>
            <person name="Wedler H."/>
            <person name="Koehrer K."/>
            <person name="Ottenwaelder B."/>
            <person name="Poustka A."/>
            <person name="Wiemann S."/>
            <person name="Schupp I."/>
        </authorList>
    </citation>
    <scope>NUCLEOTIDE SEQUENCE [LARGE SCALE MRNA] (ISOFORM 1)</scope>
    <source>
        <tissue>Melanoma</tissue>
    </source>
</reference>
<reference key="6">
    <citation type="journal article" date="2006" name="Nature">
        <title>DNA sequence and analysis of human chromosome 8.</title>
        <authorList>
            <person name="Nusbaum C."/>
            <person name="Mikkelsen T.S."/>
            <person name="Zody M.C."/>
            <person name="Asakawa S."/>
            <person name="Taudien S."/>
            <person name="Garber M."/>
            <person name="Kodira C.D."/>
            <person name="Schueler M.G."/>
            <person name="Shimizu A."/>
            <person name="Whittaker C.A."/>
            <person name="Chang J.L."/>
            <person name="Cuomo C.A."/>
            <person name="Dewar K."/>
            <person name="FitzGerald M.G."/>
            <person name="Yang X."/>
            <person name="Allen N.R."/>
            <person name="Anderson S."/>
            <person name="Asakawa T."/>
            <person name="Blechschmidt K."/>
            <person name="Bloom T."/>
            <person name="Borowsky M.L."/>
            <person name="Butler J."/>
            <person name="Cook A."/>
            <person name="Corum B."/>
            <person name="DeArellano K."/>
            <person name="DeCaprio D."/>
            <person name="Dooley K.T."/>
            <person name="Dorris L. III"/>
            <person name="Engels R."/>
            <person name="Gloeckner G."/>
            <person name="Hafez N."/>
            <person name="Hagopian D.S."/>
            <person name="Hall J.L."/>
            <person name="Ishikawa S.K."/>
            <person name="Jaffe D.B."/>
            <person name="Kamat A."/>
            <person name="Kudoh J."/>
            <person name="Lehmann R."/>
            <person name="Lokitsang T."/>
            <person name="Macdonald P."/>
            <person name="Major J.E."/>
            <person name="Matthews C.D."/>
            <person name="Mauceli E."/>
            <person name="Menzel U."/>
            <person name="Mihalev A.H."/>
            <person name="Minoshima S."/>
            <person name="Murayama Y."/>
            <person name="Naylor J.W."/>
            <person name="Nicol R."/>
            <person name="Nguyen C."/>
            <person name="O'Leary S.B."/>
            <person name="O'Neill K."/>
            <person name="Parker S.C.J."/>
            <person name="Polley A."/>
            <person name="Raymond C.K."/>
            <person name="Reichwald K."/>
            <person name="Rodriguez J."/>
            <person name="Sasaki T."/>
            <person name="Schilhabel M."/>
            <person name="Siddiqui R."/>
            <person name="Smith C.L."/>
            <person name="Sneddon T.P."/>
            <person name="Talamas J.A."/>
            <person name="Tenzin P."/>
            <person name="Topham K."/>
            <person name="Venkataraman V."/>
            <person name="Wen G."/>
            <person name="Yamazaki S."/>
            <person name="Young S.K."/>
            <person name="Zeng Q."/>
            <person name="Zimmer A.R."/>
            <person name="Rosenthal A."/>
            <person name="Birren B.W."/>
            <person name="Platzer M."/>
            <person name="Shimizu N."/>
            <person name="Lander E.S."/>
        </authorList>
    </citation>
    <scope>NUCLEOTIDE SEQUENCE [LARGE SCALE GENOMIC DNA]</scope>
</reference>
<reference key="7">
    <citation type="submission" date="2005-07" db="EMBL/GenBank/DDBJ databases">
        <authorList>
            <person name="Mural R.J."/>
            <person name="Istrail S."/>
            <person name="Sutton G.G."/>
            <person name="Florea L."/>
            <person name="Halpern A.L."/>
            <person name="Mobarry C.M."/>
            <person name="Lippert R."/>
            <person name="Walenz B."/>
            <person name="Shatkay H."/>
            <person name="Dew I."/>
            <person name="Miller J.R."/>
            <person name="Flanigan M.J."/>
            <person name="Edwards N.J."/>
            <person name="Bolanos R."/>
            <person name="Fasulo D."/>
            <person name="Halldorsson B.V."/>
            <person name="Hannenhalli S."/>
            <person name="Turner R."/>
            <person name="Yooseph S."/>
            <person name="Lu F."/>
            <person name="Nusskern D.R."/>
            <person name="Shue B.C."/>
            <person name="Zheng X.H."/>
            <person name="Zhong F."/>
            <person name="Delcher A.L."/>
            <person name="Huson D.H."/>
            <person name="Kravitz S.A."/>
            <person name="Mouchard L."/>
            <person name="Reinert K."/>
            <person name="Remington K.A."/>
            <person name="Clark A.G."/>
            <person name="Waterman M.S."/>
            <person name="Eichler E.E."/>
            <person name="Adams M.D."/>
            <person name="Hunkapiller M.W."/>
            <person name="Myers E.W."/>
            <person name="Venter J.C."/>
        </authorList>
    </citation>
    <scope>NUCLEOTIDE SEQUENCE [LARGE SCALE GENOMIC DNA]</scope>
</reference>
<reference key="8">
    <citation type="journal article" date="2004" name="Genome Res.">
        <title>The status, quality, and expansion of the NIH full-length cDNA project: the Mammalian Gene Collection (MGC).</title>
        <authorList>
            <consortium name="The MGC Project Team"/>
        </authorList>
    </citation>
    <scope>NUCLEOTIDE SEQUENCE [LARGE SCALE MRNA] (ISOFORM 1)</scope>
    <source>
        <tissue>Cervix adenocarcinoma</tissue>
    </source>
</reference>
<gene>
    <name type="primary">CRISPLD1</name>
    <name type="synonym">CRISP10</name>
    <name type="synonym">LCRISP1</name>
    <name type="ORF">UNQ342/PRO541</name>
</gene>
<keyword id="KW-0025">Alternative splicing</keyword>
<keyword id="KW-1015">Disulfide bond</keyword>
<keyword id="KW-1267">Proteomics identification</keyword>
<keyword id="KW-1185">Reference proteome</keyword>
<keyword id="KW-0677">Repeat</keyword>
<keyword id="KW-0964">Secreted</keyword>
<keyword id="KW-0732">Signal</keyword>
<name>CRLD1_HUMAN</name>
<dbReference type="EMBL" id="AF142573">
    <property type="protein sequence ID" value="AAG43287.1"/>
    <property type="molecule type" value="mRNA"/>
</dbReference>
<dbReference type="EMBL" id="AF329197">
    <property type="protein sequence ID" value="AAK16495.1"/>
    <property type="molecule type" value="mRNA"/>
</dbReference>
<dbReference type="EMBL" id="AY358564">
    <property type="protein sequence ID" value="AAQ88927.1"/>
    <property type="molecule type" value="mRNA"/>
</dbReference>
<dbReference type="EMBL" id="AK304350">
    <property type="protein sequence ID" value="BAH14165.1"/>
    <property type="molecule type" value="mRNA"/>
</dbReference>
<dbReference type="EMBL" id="AK314048">
    <property type="protein sequence ID" value="BAG36757.1"/>
    <property type="molecule type" value="mRNA"/>
</dbReference>
<dbReference type="EMBL" id="AL834301">
    <property type="protein sequence ID" value="CAH56361.1"/>
    <property type="molecule type" value="mRNA"/>
</dbReference>
<dbReference type="EMBL" id="AC100782">
    <property type="status" value="NOT_ANNOTATED_CDS"/>
    <property type="molecule type" value="Genomic_DNA"/>
</dbReference>
<dbReference type="EMBL" id="AC102801">
    <property type="status" value="NOT_ANNOTATED_CDS"/>
    <property type="molecule type" value="Genomic_DNA"/>
</dbReference>
<dbReference type="EMBL" id="CH471068">
    <property type="protein sequence ID" value="EAW87038.1"/>
    <property type="molecule type" value="Genomic_DNA"/>
</dbReference>
<dbReference type="EMBL" id="BC020514">
    <property type="protein sequence ID" value="AAH20514.1"/>
    <property type="molecule type" value="mRNA"/>
</dbReference>
<dbReference type="CCDS" id="CCDS6219.1">
    <molecule id="Q9H336-1"/>
</dbReference>
<dbReference type="CCDS" id="CCDS69497.1">
    <molecule id="Q9H336-2"/>
</dbReference>
<dbReference type="RefSeq" id="NP_001273706.1">
    <molecule id="Q9H336-2"/>
    <property type="nucleotide sequence ID" value="NM_001286777.2"/>
</dbReference>
<dbReference type="RefSeq" id="NP_113649.1">
    <molecule id="Q9H336-1"/>
    <property type="nucleotide sequence ID" value="NM_031461.6"/>
</dbReference>
<dbReference type="SMR" id="Q9H336"/>
<dbReference type="BioGRID" id="123725">
    <property type="interactions" value="14"/>
</dbReference>
<dbReference type="FunCoup" id="Q9H336">
    <property type="interactions" value="275"/>
</dbReference>
<dbReference type="IntAct" id="Q9H336">
    <property type="interactions" value="4"/>
</dbReference>
<dbReference type="STRING" id="9606.ENSP00000262207"/>
<dbReference type="GlyGen" id="Q9H336">
    <property type="glycosylation" value="2 sites, 1 N-linked glycan (1 site)"/>
</dbReference>
<dbReference type="iPTMnet" id="Q9H336"/>
<dbReference type="PhosphoSitePlus" id="Q9H336"/>
<dbReference type="BioMuta" id="CRISPLD1"/>
<dbReference type="DMDM" id="74733568"/>
<dbReference type="jPOST" id="Q9H336"/>
<dbReference type="MassIVE" id="Q9H336"/>
<dbReference type="PaxDb" id="9606-ENSP00000262207"/>
<dbReference type="PeptideAtlas" id="Q9H336"/>
<dbReference type="ProteomicsDB" id="6999"/>
<dbReference type="ProteomicsDB" id="80668">
    <molecule id="Q9H336-1"/>
</dbReference>
<dbReference type="Antibodypedia" id="12356">
    <property type="antibodies" value="80 antibodies from 17 providers"/>
</dbReference>
<dbReference type="DNASU" id="83690"/>
<dbReference type="Ensembl" id="ENST00000262207.9">
    <molecule id="Q9H336-1"/>
    <property type="protein sequence ID" value="ENSP00000262207.4"/>
    <property type="gene ID" value="ENSG00000121005.9"/>
</dbReference>
<dbReference type="Ensembl" id="ENST00000517786.1">
    <molecule id="Q9H336-2"/>
    <property type="protein sequence ID" value="ENSP00000429746.1"/>
    <property type="gene ID" value="ENSG00000121005.9"/>
</dbReference>
<dbReference type="GeneID" id="83690"/>
<dbReference type="KEGG" id="hsa:83690"/>
<dbReference type="MANE-Select" id="ENST00000262207.9">
    <property type="protein sequence ID" value="ENSP00000262207.4"/>
    <property type="RefSeq nucleotide sequence ID" value="NM_031461.6"/>
    <property type="RefSeq protein sequence ID" value="NP_113649.1"/>
</dbReference>
<dbReference type="UCSC" id="uc003yan.5">
    <molecule id="Q9H336-1"/>
    <property type="organism name" value="human"/>
</dbReference>
<dbReference type="AGR" id="HGNC:18206"/>
<dbReference type="CTD" id="83690"/>
<dbReference type="DisGeNET" id="83690"/>
<dbReference type="GeneCards" id="CRISPLD1"/>
<dbReference type="HGNC" id="HGNC:18206">
    <property type="gene designation" value="CRISPLD1"/>
</dbReference>
<dbReference type="HPA" id="ENSG00000121005">
    <property type="expression patterns" value="Tissue enhanced (breast)"/>
</dbReference>
<dbReference type="neXtProt" id="NX_Q9H336"/>
<dbReference type="OpenTargets" id="ENSG00000121005"/>
<dbReference type="PharmGKB" id="PA142672076"/>
<dbReference type="VEuPathDB" id="HostDB:ENSG00000121005"/>
<dbReference type="eggNOG" id="KOG3017">
    <property type="taxonomic scope" value="Eukaryota"/>
</dbReference>
<dbReference type="GeneTree" id="ENSGT00940000156473"/>
<dbReference type="HOGENOM" id="CLU_042287_0_0_1"/>
<dbReference type="InParanoid" id="Q9H336"/>
<dbReference type="OMA" id="MVWDVEL"/>
<dbReference type="OrthoDB" id="414826at2759"/>
<dbReference type="PAN-GO" id="Q9H336">
    <property type="GO annotations" value="1 GO annotation based on evolutionary models"/>
</dbReference>
<dbReference type="PhylomeDB" id="Q9H336"/>
<dbReference type="TreeFam" id="TF316148"/>
<dbReference type="PathwayCommons" id="Q9H336"/>
<dbReference type="BioGRID-ORCS" id="83690">
    <property type="hits" value="10 hits in 1150 CRISPR screens"/>
</dbReference>
<dbReference type="GenomeRNAi" id="83690"/>
<dbReference type="Pharos" id="Q9H336">
    <property type="development level" value="Tbio"/>
</dbReference>
<dbReference type="PRO" id="PR:Q9H336"/>
<dbReference type="Proteomes" id="UP000005640">
    <property type="component" value="Chromosome 8"/>
</dbReference>
<dbReference type="RNAct" id="Q9H336">
    <property type="molecule type" value="protein"/>
</dbReference>
<dbReference type="Bgee" id="ENSG00000121005">
    <property type="expression patterns" value="Expressed in tibia and 156 other cell types or tissues"/>
</dbReference>
<dbReference type="ExpressionAtlas" id="Q9H336">
    <property type="expression patterns" value="baseline and differential"/>
</dbReference>
<dbReference type="GO" id="GO:0070062">
    <property type="term" value="C:extracellular exosome"/>
    <property type="evidence" value="ECO:0007005"/>
    <property type="project" value="UniProtKB"/>
</dbReference>
<dbReference type="GO" id="GO:0005615">
    <property type="term" value="C:extracellular space"/>
    <property type="evidence" value="ECO:0000318"/>
    <property type="project" value="GO_Central"/>
</dbReference>
<dbReference type="GO" id="GO:0060325">
    <property type="term" value="P:face morphogenesis"/>
    <property type="evidence" value="ECO:0000315"/>
    <property type="project" value="UniProtKB"/>
</dbReference>
<dbReference type="GO" id="GO:0061484">
    <property type="term" value="P:hematopoietic stem cell homeostasis"/>
    <property type="evidence" value="ECO:0007669"/>
    <property type="project" value="Ensembl"/>
</dbReference>
<dbReference type="CDD" id="cd18813">
    <property type="entry name" value="CAP_CRISPLD1"/>
    <property type="match status" value="1"/>
</dbReference>
<dbReference type="FunFam" id="3.40.33.10:FF:000001">
    <property type="entry name" value="Cysteine-rich secretory protein LCCL domain containing 1"/>
    <property type="match status" value="1"/>
</dbReference>
<dbReference type="FunFam" id="2.170.130.20:FF:000001">
    <property type="entry name" value="Cysteine-rich secretory protein LCCL domain-containing 1"/>
    <property type="match status" value="2"/>
</dbReference>
<dbReference type="Gene3D" id="3.40.33.10">
    <property type="entry name" value="CAP"/>
    <property type="match status" value="1"/>
</dbReference>
<dbReference type="Gene3D" id="2.170.130.20">
    <property type="entry name" value="LCCL-like domain"/>
    <property type="match status" value="2"/>
</dbReference>
<dbReference type="InterPro" id="IPR018244">
    <property type="entry name" value="Allrgn_V5/Tpx1_CS"/>
</dbReference>
<dbReference type="InterPro" id="IPR014044">
    <property type="entry name" value="CAP_dom"/>
</dbReference>
<dbReference type="InterPro" id="IPR035940">
    <property type="entry name" value="CAP_sf"/>
</dbReference>
<dbReference type="InterPro" id="IPR051957">
    <property type="entry name" value="CRISP-LCCL_domain"/>
</dbReference>
<dbReference type="InterPro" id="IPR001283">
    <property type="entry name" value="CRISP-related"/>
</dbReference>
<dbReference type="InterPro" id="IPR004043">
    <property type="entry name" value="LCCL"/>
</dbReference>
<dbReference type="InterPro" id="IPR036609">
    <property type="entry name" value="LCCL_sf"/>
</dbReference>
<dbReference type="PANTHER" id="PTHR31331:SF1">
    <property type="entry name" value="CYSTEINE RICH SECRETORY PROTEIN LCCL DOMAIN CONTAINING 2"/>
    <property type="match status" value="1"/>
</dbReference>
<dbReference type="PANTHER" id="PTHR31331">
    <property type="entry name" value="LCCL DOMAIN PROTEIN (AFU_ORTHOLOGUE AFUA_5G08630)"/>
    <property type="match status" value="1"/>
</dbReference>
<dbReference type="Pfam" id="PF00188">
    <property type="entry name" value="CAP"/>
    <property type="match status" value="1"/>
</dbReference>
<dbReference type="Pfam" id="PF03815">
    <property type="entry name" value="LCCL"/>
    <property type="match status" value="2"/>
</dbReference>
<dbReference type="PRINTS" id="PR00837">
    <property type="entry name" value="V5TPXLIKE"/>
</dbReference>
<dbReference type="SMART" id="SM00603">
    <property type="entry name" value="LCCL"/>
    <property type="match status" value="2"/>
</dbReference>
<dbReference type="SMART" id="SM00198">
    <property type="entry name" value="SCP"/>
    <property type="match status" value="1"/>
</dbReference>
<dbReference type="SUPFAM" id="SSF69848">
    <property type="entry name" value="LCCL domain"/>
    <property type="match status" value="2"/>
</dbReference>
<dbReference type="SUPFAM" id="SSF55797">
    <property type="entry name" value="PR-1-like"/>
    <property type="match status" value="1"/>
</dbReference>
<dbReference type="PROSITE" id="PS01010">
    <property type="entry name" value="CRISP_2"/>
    <property type="match status" value="1"/>
</dbReference>
<dbReference type="PROSITE" id="PS50820">
    <property type="entry name" value="LCCL"/>
    <property type="match status" value="2"/>
</dbReference>
<feature type="signal peptide" evidence="1">
    <location>
        <begin position="1"/>
        <end position="23"/>
    </location>
</feature>
<feature type="chain" id="PRO_0000248146" description="Cysteine-rich secretory protein LCCL domain-containing 1">
    <location>
        <begin position="24"/>
        <end position="500"/>
    </location>
</feature>
<feature type="domain" description="SCP">
    <location>
        <begin position="66"/>
        <end position="206"/>
    </location>
</feature>
<feature type="domain" description="LCCL 1" evidence="2">
    <location>
        <begin position="289"/>
        <end position="384"/>
    </location>
</feature>
<feature type="domain" description="LCCL 2" evidence="2">
    <location>
        <begin position="390"/>
        <end position="492"/>
    </location>
</feature>
<feature type="region of interest" description="Disordered" evidence="3">
    <location>
        <begin position="254"/>
        <end position="281"/>
    </location>
</feature>
<feature type="compositionally biased region" description="Basic and acidic residues" evidence="3">
    <location>
        <begin position="254"/>
        <end position="280"/>
    </location>
</feature>
<feature type="disulfide bond" evidence="2">
    <location>
        <begin position="295"/>
        <end position="313"/>
    </location>
</feature>
<feature type="disulfide bond" evidence="2">
    <location>
        <begin position="317"/>
        <end position="337"/>
    </location>
</feature>
<feature type="disulfide bond" evidence="2">
    <location>
        <begin position="396"/>
        <end position="418"/>
    </location>
</feature>
<feature type="disulfide bond" evidence="2">
    <location>
        <begin position="422"/>
        <end position="445"/>
    </location>
</feature>
<feature type="splice variant" id="VSP_055281" description="In isoform 2." evidence="4">
    <original>MKCTAREWLRVTTVLFMARAIPA</original>
    <variation>MNMNATHIVHSGVLALYVHIIHR</variation>
    <location>
        <begin position="1"/>
        <end position="23"/>
    </location>
</feature>
<feature type="splice variant" id="VSP_055282" description="In isoform 2." evidence="4">
    <location>
        <begin position="24"/>
        <end position="209"/>
    </location>
</feature>
<feature type="sequence variant" id="VAR_027255" description="In dbSNP:rs1945.">
    <original>A</original>
    <variation>S</variation>
    <location>
        <position position="286"/>
    </location>
</feature>